<proteinExistence type="evidence at transcript level"/>
<organism>
    <name type="scientific">Sus scrofa</name>
    <name type="common">Pig</name>
    <dbReference type="NCBI Taxonomy" id="9823"/>
    <lineage>
        <taxon>Eukaryota</taxon>
        <taxon>Metazoa</taxon>
        <taxon>Chordata</taxon>
        <taxon>Craniata</taxon>
        <taxon>Vertebrata</taxon>
        <taxon>Euteleostomi</taxon>
        <taxon>Mammalia</taxon>
        <taxon>Eutheria</taxon>
        <taxon>Laurasiatheria</taxon>
        <taxon>Artiodactyla</taxon>
        <taxon>Suina</taxon>
        <taxon>Suidae</taxon>
        <taxon>Sus</taxon>
    </lineage>
</organism>
<name>CSN6_PIG</name>
<feature type="chain" id="PRO_0000331508" description="COP9 signalosome complex subunit 6">
    <location>
        <begin position="1"/>
        <end position="323"/>
    </location>
</feature>
<feature type="domain" description="MPN" evidence="2">
    <location>
        <begin position="37"/>
        <end position="170"/>
    </location>
</feature>
<accession>A7TX81</accession>
<keyword id="KW-0963">Cytoplasm</keyword>
<keyword id="KW-0539">Nucleus</keyword>
<keyword id="KW-1185">Reference proteome</keyword>
<keyword id="KW-0736">Signalosome</keyword>
<evidence type="ECO:0000250" key="1">
    <source>
        <dbReference type="UniProtKB" id="Q7L5N1"/>
    </source>
</evidence>
<evidence type="ECO:0000255" key="2">
    <source>
        <dbReference type="PROSITE-ProRule" id="PRU01182"/>
    </source>
</evidence>
<evidence type="ECO:0000305" key="3"/>
<dbReference type="EMBL" id="EF468513">
    <property type="protein sequence ID" value="ABR13017.1"/>
    <property type="molecule type" value="mRNA"/>
</dbReference>
<dbReference type="RefSeq" id="NP_001098769.1">
    <property type="nucleotide sequence ID" value="NM_001105299.1"/>
</dbReference>
<dbReference type="SMR" id="A7TX81"/>
<dbReference type="FunCoup" id="A7TX81">
    <property type="interactions" value="2273"/>
</dbReference>
<dbReference type="IntAct" id="A7TX81">
    <property type="interactions" value="1"/>
</dbReference>
<dbReference type="STRING" id="9823.ENSSSCP00000041142"/>
<dbReference type="PeptideAtlas" id="A7TX81"/>
<dbReference type="Ensembl" id="ENSSSCT00015076247.1">
    <property type="protein sequence ID" value="ENSSSCP00015030623.1"/>
    <property type="gene ID" value="ENSSSCG00015056935.1"/>
</dbReference>
<dbReference type="Ensembl" id="ENSSSCT00025014430.1">
    <property type="protein sequence ID" value="ENSSSCP00025005580.1"/>
    <property type="gene ID" value="ENSSSCG00025010993.1"/>
</dbReference>
<dbReference type="Ensembl" id="ENSSSCT00030004911.1">
    <property type="protein sequence ID" value="ENSSSCP00030001950.1"/>
    <property type="gene ID" value="ENSSSCG00030003769.1"/>
</dbReference>
<dbReference type="Ensembl" id="ENSSSCT00035047917.1">
    <property type="protein sequence ID" value="ENSSSCP00035019165.1"/>
    <property type="gene ID" value="ENSSSCG00035036150.1"/>
</dbReference>
<dbReference type="Ensembl" id="ENSSSCT00040047888.1">
    <property type="protein sequence ID" value="ENSSSCP00040020018.1"/>
    <property type="gene ID" value="ENSSSCG00040035470.1"/>
</dbReference>
<dbReference type="Ensembl" id="ENSSSCT00045029379.1">
    <property type="protein sequence ID" value="ENSSSCP00045020356.1"/>
    <property type="gene ID" value="ENSSSCG00045017261.1"/>
</dbReference>
<dbReference type="Ensembl" id="ENSSSCT00050046096.1">
    <property type="protein sequence ID" value="ENSSSCP00050018974.1"/>
    <property type="gene ID" value="ENSSSCG00050034350.1"/>
</dbReference>
<dbReference type="Ensembl" id="ENSSSCT00055055755.1">
    <property type="protein sequence ID" value="ENSSSCP00055044504.1"/>
    <property type="gene ID" value="ENSSSCG00055028153.1"/>
</dbReference>
<dbReference type="Ensembl" id="ENSSSCT00055055899.1">
    <property type="protein sequence ID" value="ENSSSCP00055044630.1"/>
    <property type="gene ID" value="ENSSSCG00055028153.1"/>
</dbReference>
<dbReference type="Ensembl" id="ENSSSCT00060060661.1">
    <property type="protein sequence ID" value="ENSSSCP00060025986.1"/>
    <property type="gene ID" value="ENSSSCG00060044722.1"/>
</dbReference>
<dbReference type="Ensembl" id="ENSSSCT00065067566.1">
    <property type="protein sequence ID" value="ENSSSCP00065029387.1"/>
    <property type="gene ID" value="ENSSSCG00065049347.1"/>
</dbReference>
<dbReference type="Ensembl" id="ENSSSCT00065067595.1">
    <property type="protein sequence ID" value="ENSSSCP00065029405.1"/>
    <property type="gene ID" value="ENSSSCG00065049347.1"/>
</dbReference>
<dbReference type="Ensembl" id="ENSSSCT00070030098.1">
    <property type="protein sequence ID" value="ENSSSCP00070025101.1"/>
    <property type="gene ID" value="ENSSSCG00070015310.1"/>
</dbReference>
<dbReference type="Ensembl" id="ENSSSCT00110057658">
    <property type="protein sequence ID" value="ENSSSCP00110040138"/>
    <property type="gene ID" value="ENSSSCG00110030163"/>
</dbReference>
<dbReference type="Ensembl" id="ENSSSCT00115027747">
    <property type="protein sequence ID" value="ENSSSCP00115026307"/>
    <property type="gene ID" value="ENSSSCG00115015868"/>
</dbReference>
<dbReference type="GeneID" id="100125954"/>
<dbReference type="KEGG" id="ssc:100125954"/>
<dbReference type="CTD" id="10980"/>
<dbReference type="InParanoid" id="A7TX81"/>
<dbReference type="OrthoDB" id="1378at2759"/>
<dbReference type="Reactome" id="R-SSC-6781823">
    <property type="pathway name" value="Formation of TC-NER Pre-Incision Complex"/>
</dbReference>
<dbReference type="Reactome" id="R-SSC-8856825">
    <property type="pathway name" value="Cargo recognition for clathrin-mediated endocytosis"/>
</dbReference>
<dbReference type="Reactome" id="R-SSC-8951664">
    <property type="pathway name" value="Neddylation"/>
</dbReference>
<dbReference type="Proteomes" id="UP000008227">
    <property type="component" value="Unplaced"/>
</dbReference>
<dbReference type="Proteomes" id="UP000314985">
    <property type="component" value="Chromosome 3"/>
</dbReference>
<dbReference type="Proteomes" id="UP000694570">
    <property type="component" value="Unplaced"/>
</dbReference>
<dbReference type="Proteomes" id="UP000694571">
    <property type="component" value="Unplaced"/>
</dbReference>
<dbReference type="Proteomes" id="UP000694720">
    <property type="component" value="Unplaced"/>
</dbReference>
<dbReference type="Proteomes" id="UP000694722">
    <property type="component" value="Unplaced"/>
</dbReference>
<dbReference type="Proteomes" id="UP000694723">
    <property type="component" value="Unplaced"/>
</dbReference>
<dbReference type="Proteomes" id="UP000694724">
    <property type="component" value="Unplaced"/>
</dbReference>
<dbReference type="Proteomes" id="UP000694725">
    <property type="component" value="Unplaced"/>
</dbReference>
<dbReference type="Proteomes" id="UP000694726">
    <property type="component" value="Unplaced"/>
</dbReference>
<dbReference type="Proteomes" id="UP000694727">
    <property type="component" value="Unplaced"/>
</dbReference>
<dbReference type="Proteomes" id="UP000694728">
    <property type="component" value="Unplaced"/>
</dbReference>
<dbReference type="Bgee" id="ENSSSCG00000034893">
    <property type="expression patterns" value="Expressed in forelimb bud and 41 other cell types or tissues"/>
</dbReference>
<dbReference type="ExpressionAtlas" id="A7TX81">
    <property type="expression patterns" value="baseline"/>
</dbReference>
<dbReference type="GO" id="GO:0008180">
    <property type="term" value="C:COP9 signalosome"/>
    <property type="evidence" value="ECO:0000318"/>
    <property type="project" value="GO_Central"/>
</dbReference>
<dbReference type="GO" id="GO:0005737">
    <property type="term" value="C:cytoplasm"/>
    <property type="evidence" value="ECO:0007669"/>
    <property type="project" value="UniProtKB-SubCell"/>
</dbReference>
<dbReference type="GO" id="GO:0008237">
    <property type="term" value="F:metallopeptidase activity"/>
    <property type="evidence" value="ECO:0007669"/>
    <property type="project" value="InterPro"/>
</dbReference>
<dbReference type="GO" id="GO:0000338">
    <property type="term" value="P:protein deneddylation"/>
    <property type="evidence" value="ECO:0007669"/>
    <property type="project" value="InterPro"/>
</dbReference>
<dbReference type="CDD" id="cd08063">
    <property type="entry name" value="MPN_CSN6"/>
    <property type="match status" value="1"/>
</dbReference>
<dbReference type="FunFam" id="3.40.140.10:FF:000017">
    <property type="entry name" value="COP9 signalosome complex subunit 6"/>
    <property type="match status" value="1"/>
</dbReference>
<dbReference type="Gene3D" id="3.40.140.10">
    <property type="entry name" value="Cytidine Deaminase, domain 2"/>
    <property type="match status" value="1"/>
</dbReference>
<dbReference type="InterPro" id="IPR024969">
    <property type="entry name" value="EIF3F/CSN6-like_C"/>
</dbReference>
<dbReference type="InterPro" id="IPR000555">
    <property type="entry name" value="JAMM/MPN+_dom"/>
</dbReference>
<dbReference type="InterPro" id="IPR037518">
    <property type="entry name" value="MPN"/>
</dbReference>
<dbReference type="InterPro" id="IPR033859">
    <property type="entry name" value="MPN_CSN6"/>
</dbReference>
<dbReference type="PANTHER" id="PTHR10540:SF8">
    <property type="entry name" value="COP9 SIGNALOSOME COMPLEX SUBUNIT 6"/>
    <property type="match status" value="1"/>
</dbReference>
<dbReference type="PANTHER" id="PTHR10540">
    <property type="entry name" value="EUKARYOTIC TRANSLATION INITIATION FACTOR 3 SUBUNIT F-RELATED"/>
    <property type="match status" value="1"/>
</dbReference>
<dbReference type="Pfam" id="PF01398">
    <property type="entry name" value="JAB"/>
    <property type="match status" value="1"/>
</dbReference>
<dbReference type="Pfam" id="PF13012">
    <property type="entry name" value="MitMem_reg"/>
    <property type="match status" value="1"/>
</dbReference>
<dbReference type="SMART" id="SM00232">
    <property type="entry name" value="JAB_MPN"/>
    <property type="match status" value="1"/>
</dbReference>
<dbReference type="PROSITE" id="PS50249">
    <property type="entry name" value="MPN"/>
    <property type="match status" value="1"/>
</dbReference>
<protein>
    <recommendedName>
        <fullName>COP9 signalosome complex subunit 6</fullName>
        <shortName>SGN6</shortName>
        <shortName>Signalosome subunit 6</shortName>
    </recommendedName>
</protein>
<gene>
    <name type="primary">COPS6</name>
</gene>
<reference key="1">
    <citation type="journal article" date="2007" name="Anim. Genet.">
        <title>Chromosomal assignments of the porcine COPS2, COPS4, COPS5, COPS6, USP6 and USP10 genes involved in the ubiquitin-proteasome system.</title>
        <authorList>
            <person name="Wu X."/>
            <person name="Li K."/>
            <person name="Yerle M."/>
            <person name="Pan Y.C."/>
        </authorList>
    </citation>
    <scope>NUCLEOTIDE SEQUENCE [MRNA]</scope>
    <source>
        <tissue>Muscle</tissue>
    </source>
</reference>
<comment type="function">
    <text evidence="1">Component of the COP9 signalosome complex (CSN), a complex involved in various cellular and developmental processes (By similarity). The CSN complex is an essential regulator of the ubiquitin (Ubl) conjugation pathway by mediating the deneddylation of the cullin subunits of SCF-type E3 ligase complexes, leading to decrease the Ubl ligase activity of SCF-type complexes such as SCF, CSA or DDB2 (By similarity). The complex is also involved in phosphorylation of p53/TP53, c-jun/JUN, IkappaBalpha/NFKBIA, ITPK1 and IRF8, possibly via its association with CK2 and PKD kinases (By similarity). CSN-dependent phosphorylation of TP53 and JUN promotes and protects degradation by the Ubl system, respectively (By similarity). Has some glucocorticoid receptor-responsive activity (By similarity). Stabilizes COP1 through reducing COP1 auto-ubiquitination and decelerating COP1 turnover rate, hence regulates the ubiquitination of COP1 targets, including SFN (By similarity).</text>
</comment>
<comment type="subunit">
    <text evidence="1">Component of the CSN complex, composed of COPS1/GPS1, COPS2, COPS3, COPS4, COPS5, COPS6, COPS7 (COPS7A or COPS7B), COPS8 and COPS9 (By similarity). In the complex, it probably interacts directly with COPS2, COPS4, COPS5, COPS7 (COPS7A or COPS7B) and COPS9 (By similarity). Interacts with the translation initiation factor EIF3S6 (By similarity). Interacts weakly with RBX1 (By similarity). Directly interacts with COP1 and 14-3-3 protein sigma/SFN (By similarity). Interacts with ERCC6 (By similarity).</text>
</comment>
<comment type="subcellular location">
    <subcellularLocation>
        <location evidence="1">Cytoplasm</location>
    </subcellularLocation>
    <subcellularLocation>
        <location evidence="1">Nucleus</location>
    </subcellularLocation>
</comment>
<comment type="similarity">
    <text evidence="3">Belongs to the peptidase M67A family. CSN6 subfamily.</text>
</comment>
<comment type="caution">
    <text evidence="3">Although related to the peptidase M67A family, it lacks the JAMM motif that probably constitutes the catalytic center and therefore it probably does not have a protease activity.</text>
</comment>
<sequence>MAAAAAANGTGGSSGMEVDAAVVPSVMASGVTGSVSVALHPLVILNISDHWIRMRSQEGRPMQVIGALIGKQEGRNIEVMNSFELLSHTVEEKIIIDKEYYYTKEEQFKQVFKELEFLGWYTTGGPPDPSDIHVHKQVCEIIESPLFLKLNPMTKHTDLPVSVFESVIDIINGEATMLFAELTYTLATEEAERIGVDHVARMTATGSGENSTVAEHLIAQHSAIKMLHSRVKLILEYVKASEAGEVPFNHEILREAYALCHCLPVLSTDKFKTDFYDQCNDVGLMAYLGTITKTCNTMNQFVNKFNVLYDRQGIGRRMRGLFF</sequence>